<reference key="1">
    <citation type="submission" date="2006-03" db="EMBL/GenBank/DDBJ databases">
        <title>Complete sequence of Rhodopseudomonas palustris BisB5.</title>
        <authorList>
            <consortium name="US DOE Joint Genome Institute"/>
            <person name="Copeland A."/>
            <person name="Lucas S."/>
            <person name="Lapidus A."/>
            <person name="Barry K."/>
            <person name="Detter J.C."/>
            <person name="Glavina del Rio T."/>
            <person name="Hammon N."/>
            <person name="Israni S."/>
            <person name="Dalin E."/>
            <person name="Tice H."/>
            <person name="Pitluck S."/>
            <person name="Chain P."/>
            <person name="Malfatti S."/>
            <person name="Shin M."/>
            <person name="Vergez L."/>
            <person name="Schmutz J."/>
            <person name="Larimer F."/>
            <person name="Land M."/>
            <person name="Hauser L."/>
            <person name="Pelletier D.A."/>
            <person name="Kyrpides N."/>
            <person name="Lykidis A."/>
            <person name="Oda Y."/>
            <person name="Harwood C.S."/>
            <person name="Richardson P."/>
        </authorList>
    </citation>
    <scope>NUCLEOTIDE SEQUENCE [LARGE SCALE GENOMIC DNA]</scope>
    <source>
        <strain>BisB5</strain>
    </source>
</reference>
<sequence length="317" mass="34584">MTPALKSTFVLAHRHLLGIEGLSAADITGLLDLSEEYVELNRQVDKKRASLRGRTQVNLFFEASTRTQSSFEIAGKRLGADVMNMSVSSSSMRKGETLMDTAVTLNAMHPDILVVRHHASGAVELLARKVDGSVINAGDGAHEHPTQALLDALTIRRNKGRLEGLVVAICGDVMHSRVARSNILLLNTMGARVRVVAPSTLLPRGIERMGVEVARDMREGLDGADIVMMLRLQRERMNGSFVPSSQEYFHYFGLDQKKLAYAKPDALVMHPGPMNRGVEIDSIVADGAQSVIREQVEMGVAVRMAVLEALARNLPNA</sequence>
<proteinExistence type="inferred from homology"/>
<comment type="function">
    <text evidence="1">Catalyzes the condensation of carbamoyl phosphate and aspartate to form carbamoyl aspartate and inorganic phosphate, the committed step in the de novo pyrimidine nucleotide biosynthesis pathway.</text>
</comment>
<comment type="catalytic activity">
    <reaction evidence="1">
        <text>carbamoyl phosphate + L-aspartate = N-carbamoyl-L-aspartate + phosphate + H(+)</text>
        <dbReference type="Rhea" id="RHEA:20013"/>
        <dbReference type="ChEBI" id="CHEBI:15378"/>
        <dbReference type="ChEBI" id="CHEBI:29991"/>
        <dbReference type="ChEBI" id="CHEBI:32814"/>
        <dbReference type="ChEBI" id="CHEBI:43474"/>
        <dbReference type="ChEBI" id="CHEBI:58228"/>
        <dbReference type="EC" id="2.1.3.2"/>
    </reaction>
</comment>
<comment type="pathway">
    <text evidence="1">Pyrimidine metabolism; UMP biosynthesis via de novo pathway; (S)-dihydroorotate from bicarbonate: step 2/3.</text>
</comment>
<comment type="subunit">
    <text evidence="1">Heterododecamer (2C3:3R2) of six catalytic PyrB chains organized as two trimers (C3), and six regulatory PyrI chains organized as three dimers (R2).</text>
</comment>
<comment type="similarity">
    <text evidence="1">Belongs to the aspartate/ornithine carbamoyltransferase superfamily. ATCase family.</text>
</comment>
<dbReference type="EC" id="2.1.3.2" evidence="1"/>
<dbReference type="EMBL" id="CP000283">
    <property type="protein sequence ID" value="ABE40254.1"/>
    <property type="molecule type" value="Genomic_DNA"/>
</dbReference>
<dbReference type="SMR" id="Q135I5"/>
<dbReference type="STRING" id="316057.RPD_3028"/>
<dbReference type="KEGG" id="rpd:RPD_3028"/>
<dbReference type="eggNOG" id="COG0540">
    <property type="taxonomic scope" value="Bacteria"/>
</dbReference>
<dbReference type="HOGENOM" id="CLU_043846_2_0_5"/>
<dbReference type="BioCyc" id="RPAL316057:RPD_RS15205-MONOMER"/>
<dbReference type="UniPathway" id="UPA00070">
    <property type="reaction ID" value="UER00116"/>
</dbReference>
<dbReference type="Proteomes" id="UP000001818">
    <property type="component" value="Chromosome"/>
</dbReference>
<dbReference type="GO" id="GO:0005829">
    <property type="term" value="C:cytosol"/>
    <property type="evidence" value="ECO:0007669"/>
    <property type="project" value="TreeGrafter"/>
</dbReference>
<dbReference type="GO" id="GO:0016597">
    <property type="term" value="F:amino acid binding"/>
    <property type="evidence" value="ECO:0007669"/>
    <property type="project" value="InterPro"/>
</dbReference>
<dbReference type="GO" id="GO:0004070">
    <property type="term" value="F:aspartate carbamoyltransferase activity"/>
    <property type="evidence" value="ECO:0007669"/>
    <property type="project" value="UniProtKB-UniRule"/>
</dbReference>
<dbReference type="GO" id="GO:0006207">
    <property type="term" value="P:'de novo' pyrimidine nucleobase biosynthetic process"/>
    <property type="evidence" value="ECO:0007669"/>
    <property type="project" value="InterPro"/>
</dbReference>
<dbReference type="GO" id="GO:0044205">
    <property type="term" value="P:'de novo' UMP biosynthetic process"/>
    <property type="evidence" value="ECO:0007669"/>
    <property type="project" value="UniProtKB-UniRule"/>
</dbReference>
<dbReference type="GO" id="GO:0006520">
    <property type="term" value="P:amino acid metabolic process"/>
    <property type="evidence" value="ECO:0007669"/>
    <property type="project" value="InterPro"/>
</dbReference>
<dbReference type="FunFam" id="3.40.50.1370:FF:000007">
    <property type="entry name" value="Aspartate carbamoyltransferase"/>
    <property type="match status" value="1"/>
</dbReference>
<dbReference type="Gene3D" id="3.40.50.1370">
    <property type="entry name" value="Aspartate/ornithine carbamoyltransferase"/>
    <property type="match status" value="2"/>
</dbReference>
<dbReference type="HAMAP" id="MF_00001">
    <property type="entry name" value="Asp_carb_tr"/>
    <property type="match status" value="1"/>
</dbReference>
<dbReference type="InterPro" id="IPR006132">
    <property type="entry name" value="Asp/Orn_carbamoyltranf_P-bd"/>
</dbReference>
<dbReference type="InterPro" id="IPR006130">
    <property type="entry name" value="Asp/Orn_carbamoylTrfase"/>
</dbReference>
<dbReference type="InterPro" id="IPR036901">
    <property type="entry name" value="Asp/Orn_carbamoylTrfase_sf"/>
</dbReference>
<dbReference type="InterPro" id="IPR002082">
    <property type="entry name" value="Asp_carbamoyltransf"/>
</dbReference>
<dbReference type="InterPro" id="IPR006131">
    <property type="entry name" value="Asp_carbamoyltransf_Asp/Orn-bd"/>
</dbReference>
<dbReference type="NCBIfam" id="TIGR00670">
    <property type="entry name" value="asp_carb_tr"/>
    <property type="match status" value="1"/>
</dbReference>
<dbReference type="NCBIfam" id="NF002032">
    <property type="entry name" value="PRK00856.1"/>
    <property type="match status" value="1"/>
</dbReference>
<dbReference type="PANTHER" id="PTHR45753:SF6">
    <property type="entry name" value="ASPARTATE CARBAMOYLTRANSFERASE"/>
    <property type="match status" value="1"/>
</dbReference>
<dbReference type="PANTHER" id="PTHR45753">
    <property type="entry name" value="ORNITHINE CARBAMOYLTRANSFERASE, MITOCHONDRIAL"/>
    <property type="match status" value="1"/>
</dbReference>
<dbReference type="Pfam" id="PF00185">
    <property type="entry name" value="OTCace"/>
    <property type="match status" value="1"/>
</dbReference>
<dbReference type="Pfam" id="PF02729">
    <property type="entry name" value="OTCace_N"/>
    <property type="match status" value="1"/>
</dbReference>
<dbReference type="PRINTS" id="PR00100">
    <property type="entry name" value="AOTCASE"/>
</dbReference>
<dbReference type="PRINTS" id="PR00101">
    <property type="entry name" value="ATCASE"/>
</dbReference>
<dbReference type="SUPFAM" id="SSF53671">
    <property type="entry name" value="Aspartate/ornithine carbamoyltransferase"/>
    <property type="match status" value="1"/>
</dbReference>
<dbReference type="PROSITE" id="PS00097">
    <property type="entry name" value="CARBAMOYLTRANSFERASE"/>
    <property type="match status" value="1"/>
</dbReference>
<organism>
    <name type="scientific">Rhodopseudomonas palustris (strain BisB5)</name>
    <dbReference type="NCBI Taxonomy" id="316057"/>
    <lineage>
        <taxon>Bacteria</taxon>
        <taxon>Pseudomonadati</taxon>
        <taxon>Pseudomonadota</taxon>
        <taxon>Alphaproteobacteria</taxon>
        <taxon>Hyphomicrobiales</taxon>
        <taxon>Nitrobacteraceae</taxon>
        <taxon>Rhodopseudomonas</taxon>
    </lineage>
</organism>
<feature type="chain" id="PRO_0000301614" description="Aspartate carbamoyltransferase catalytic subunit">
    <location>
        <begin position="1"/>
        <end position="317"/>
    </location>
</feature>
<feature type="binding site" evidence="1">
    <location>
        <position position="66"/>
    </location>
    <ligand>
        <name>carbamoyl phosphate</name>
        <dbReference type="ChEBI" id="CHEBI:58228"/>
    </ligand>
</feature>
<feature type="binding site" evidence="1">
    <location>
        <position position="67"/>
    </location>
    <ligand>
        <name>carbamoyl phosphate</name>
        <dbReference type="ChEBI" id="CHEBI:58228"/>
    </ligand>
</feature>
<feature type="binding site" evidence="1">
    <location>
        <position position="94"/>
    </location>
    <ligand>
        <name>L-aspartate</name>
        <dbReference type="ChEBI" id="CHEBI:29991"/>
    </ligand>
</feature>
<feature type="binding site" evidence="1">
    <location>
        <position position="116"/>
    </location>
    <ligand>
        <name>carbamoyl phosphate</name>
        <dbReference type="ChEBI" id="CHEBI:58228"/>
    </ligand>
</feature>
<feature type="binding site" evidence="1">
    <location>
        <position position="144"/>
    </location>
    <ligand>
        <name>carbamoyl phosphate</name>
        <dbReference type="ChEBI" id="CHEBI:58228"/>
    </ligand>
</feature>
<feature type="binding site" evidence="1">
    <location>
        <position position="147"/>
    </location>
    <ligand>
        <name>carbamoyl phosphate</name>
        <dbReference type="ChEBI" id="CHEBI:58228"/>
    </ligand>
</feature>
<feature type="binding site" evidence="1">
    <location>
        <position position="177"/>
    </location>
    <ligand>
        <name>L-aspartate</name>
        <dbReference type="ChEBI" id="CHEBI:29991"/>
    </ligand>
</feature>
<feature type="binding site" evidence="1">
    <location>
        <position position="231"/>
    </location>
    <ligand>
        <name>L-aspartate</name>
        <dbReference type="ChEBI" id="CHEBI:29991"/>
    </ligand>
</feature>
<feature type="binding site" evidence="1">
    <location>
        <position position="272"/>
    </location>
    <ligand>
        <name>carbamoyl phosphate</name>
        <dbReference type="ChEBI" id="CHEBI:58228"/>
    </ligand>
</feature>
<feature type="binding site" evidence="1">
    <location>
        <position position="273"/>
    </location>
    <ligand>
        <name>carbamoyl phosphate</name>
        <dbReference type="ChEBI" id="CHEBI:58228"/>
    </ligand>
</feature>
<gene>
    <name evidence="1" type="primary">pyrB</name>
    <name type="ordered locus">RPD_3028</name>
</gene>
<keyword id="KW-0665">Pyrimidine biosynthesis</keyword>
<keyword id="KW-0808">Transferase</keyword>
<evidence type="ECO:0000255" key="1">
    <source>
        <dbReference type="HAMAP-Rule" id="MF_00001"/>
    </source>
</evidence>
<name>PYRB_RHOPS</name>
<protein>
    <recommendedName>
        <fullName evidence="1">Aspartate carbamoyltransferase catalytic subunit</fullName>
        <ecNumber evidence="1">2.1.3.2</ecNumber>
    </recommendedName>
    <alternativeName>
        <fullName evidence="1">Aspartate transcarbamylase</fullName>
        <shortName evidence="1">ATCase</shortName>
    </alternativeName>
</protein>
<accession>Q135I5</accession>